<proteinExistence type="inferred from homology"/>
<comment type="function">
    <text evidence="1">Part of the high-affinity ATP-driven potassium transport (or Kdp) system, which catalyzes the hydrolysis of ATP coupled with the electrogenic transport of potassium into the cytoplasm. This subunit acts as a catalytic chaperone that increases the ATP-binding affinity of the ATP-hydrolyzing subunit KdpB by the formation of a transient KdpB/KdpC/ATP ternary complex.</text>
</comment>
<comment type="subunit">
    <text evidence="1">The system is composed of three essential subunits: KdpA, KdpB and KdpC.</text>
</comment>
<comment type="subcellular location">
    <subcellularLocation>
        <location evidence="1">Cell inner membrane</location>
        <topology evidence="1">Single-pass membrane protein</topology>
    </subcellularLocation>
</comment>
<comment type="similarity">
    <text evidence="1">Belongs to the KdpC family.</text>
</comment>
<protein>
    <recommendedName>
        <fullName evidence="1">Potassium-transporting ATPase KdpC subunit</fullName>
    </recommendedName>
    <alternativeName>
        <fullName evidence="1">ATP phosphohydrolase [potassium-transporting] C chain</fullName>
    </alternativeName>
    <alternativeName>
        <fullName evidence="1">Potassium-binding and translocating subunit C</fullName>
    </alternativeName>
    <alternativeName>
        <fullName evidence="1">Potassium-translocating ATPase C chain</fullName>
    </alternativeName>
</protein>
<accession>Q62IJ8</accession>
<name>KDPC_BURMA</name>
<evidence type="ECO:0000255" key="1">
    <source>
        <dbReference type="HAMAP-Rule" id="MF_00276"/>
    </source>
</evidence>
<reference key="1">
    <citation type="journal article" date="2004" name="Proc. Natl. Acad. Sci. U.S.A.">
        <title>Structural flexibility in the Burkholderia mallei genome.</title>
        <authorList>
            <person name="Nierman W.C."/>
            <person name="DeShazer D."/>
            <person name="Kim H.S."/>
            <person name="Tettelin H."/>
            <person name="Nelson K.E."/>
            <person name="Feldblyum T.V."/>
            <person name="Ulrich R.L."/>
            <person name="Ronning C.M."/>
            <person name="Brinkac L.M."/>
            <person name="Daugherty S.C."/>
            <person name="Davidsen T.D."/>
            <person name="DeBoy R.T."/>
            <person name="Dimitrov G."/>
            <person name="Dodson R.J."/>
            <person name="Durkin A.S."/>
            <person name="Gwinn M.L."/>
            <person name="Haft D.H."/>
            <person name="Khouri H.M."/>
            <person name="Kolonay J.F."/>
            <person name="Madupu R."/>
            <person name="Mohammoud Y."/>
            <person name="Nelson W.C."/>
            <person name="Radune D."/>
            <person name="Romero C.M."/>
            <person name="Sarria S."/>
            <person name="Selengut J."/>
            <person name="Shamblin C."/>
            <person name="Sullivan S.A."/>
            <person name="White O."/>
            <person name="Yu Y."/>
            <person name="Zafar N."/>
            <person name="Zhou L."/>
            <person name="Fraser C.M."/>
        </authorList>
    </citation>
    <scope>NUCLEOTIDE SEQUENCE [LARGE SCALE GENOMIC DNA]</scope>
    <source>
        <strain>ATCC 23344</strain>
    </source>
</reference>
<sequence length="193" mass="20105">MKSLFRPLIVVFVVLVAVTGLAYPAVMTVFGQAVFPAQANGSLIEKGGRVVGSALIGQQFDAPQYFWGRLSATSPMPYNAAGSGGSNLGPLNPALKDQVKSRLDALKAAGTDLSQPVPVDLVTASASGLDPEISPAAADYQVARVARARKMADADVRRLVADHTSGRQFGVLGEPRVNVLKLNLALDAAQAAH</sequence>
<organism>
    <name type="scientific">Burkholderia mallei (strain ATCC 23344)</name>
    <dbReference type="NCBI Taxonomy" id="243160"/>
    <lineage>
        <taxon>Bacteria</taxon>
        <taxon>Pseudomonadati</taxon>
        <taxon>Pseudomonadota</taxon>
        <taxon>Betaproteobacteria</taxon>
        <taxon>Burkholderiales</taxon>
        <taxon>Burkholderiaceae</taxon>
        <taxon>Burkholderia</taxon>
        <taxon>pseudomallei group</taxon>
    </lineage>
</organism>
<keyword id="KW-0067">ATP-binding</keyword>
<keyword id="KW-0997">Cell inner membrane</keyword>
<keyword id="KW-1003">Cell membrane</keyword>
<keyword id="KW-0406">Ion transport</keyword>
<keyword id="KW-0472">Membrane</keyword>
<keyword id="KW-0547">Nucleotide-binding</keyword>
<keyword id="KW-0630">Potassium</keyword>
<keyword id="KW-0633">Potassium transport</keyword>
<keyword id="KW-1185">Reference proteome</keyword>
<keyword id="KW-0812">Transmembrane</keyword>
<keyword id="KW-1133">Transmembrane helix</keyword>
<keyword id="KW-0813">Transport</keyword>
<dbReference type="EMBL" id="CP000010">
    <property type="protein sequence ID" value="AAU49435.1"/>
    <property type="molecule type" value="Genomic_DNA"/>
</dbReference>
<dbReference type="RefSeq" id="WP_004186443.1">
    <property type="nucleotide sequence ID" value="NC_006348.1"/>
</dbReference>
<dbReference type="RefSeq" id="YP_103472.1">
    <property type="nucleotide sequence ID" value="NC_006348.1"/>
</dbReference>
<dbReference type="SMR" id="Q62IJ8"/>
<dbReference type="GeneID" id="93059654"/>
<dbReference type="KEGG" id="bma:BMA1874"/>
<dbReference type="PATRIC" id="fig|243160.12.peg.1915"/>
<dbReference type="eggNOG" id="COG2156">
    <property type="taxonomic scope" value="Bacteria"/>
</dbReference>
<dbReference type="HOGENOM" id="CLU_077094_2_0_4"/>
<dbReference type="Proteomes" id="UP000006693">
    <property type="component" value="Chromosome 1"/>
</dbReference>
<dbReference type="GO" id="GO:0005886">
    <property type="term" value="C:plasma membrane"/>
    <property type="evidence" value="ECO:0007669"/>
    <property type="project" value="UniProtKB-SubCell"/>
</dbReference>
<dbReference type="GO" id="GO:0005524">
    <property type="term" value="F:ATP binding"/>
    <property type="evidence" value="ECO:0007669"/>
    <property type="project" value="UniProtKB-UniRule"/>
</dbReference>
<dbReference type="GO" id="GO:0008556">
    <property type="term" value="F:P-type potassium transmembrane transporter activity"/>
    <property type="evidence" value="ECO:0007669"/>
    <property type="project" value="InterPro"/>
</dbReference>
<dbReference type="HAMAP" id="MF_00276">
    <property type="entry name" value="KdpC"/>
    <property type="match status" value="1"/>
</dbReference>
<dbReference type="InterPro" id="IPR003820">
    <property type="entry name" value="KdpC"/>
</dbReference>
<dbReference type="NCBIfam" id="TIGR00681">
    <property type="entry name" value="kdpC"/>
    <property type="match status" value="1"/>
</dbReference>
<dbReference type="NCBIfam" id="NF001454">
    <property type="entry name" value="PRK00315.1"/>
    <property type="match status" value="1"/>
</dbReference>
<dbReference type="PANTHER" id="PTHR30042">
    <property type="entry name" value="POTASSIUM-TRANSPORTING ATPASE C CHAIN"/>
    <property type="match status" value="1"/>
</dbReference>
<dbReference type="PANTHER" id="PTHR30042:SF2">
    <property type="entry name" value="POTASSIUM-TRANSPORTING ATPASE KDPC SUBUNIT"/>
    <property type="match status" value="1"/>
</dbReference>
<dbReference type="Pfam" id="PF02669">
    <property type="entry name" value="KdpC"/>
    <property type="match status" value="1"/>
</dbReference>
<dbReference type="PIRSF" id="PIRSF001296">
    <property type="entry name" value="K_ATPase_KdpC"/>
    <property type="match status" value="1"/>
</dbReference>
<gene>
    <name evidence="1" type="primary">kdpC</name>
    <name type="ordered locus">BMA1874</name>
</gene>
<feature type="chain" id="PRO_1000022271" description="Potassium-transporting ATPase KdpC subunit">
    <location>
        <begin position="1"/>
        <end position="193"/>
    </location>
</feature>
<feature type="transmembrane region" description="Helical" evidence="1">
    <location>
        <begin position="7"/>
        <end position="27"/>
    </location>
</feature>